<comment type="function">
    <text evidence="1">Plant non-specific lipid-transfer proteins transfer phospholipids as well as galactolipids across membranes. May play a role in wax or cutin deposition in the cell walls of expanding epidermal cells and certain secretory tissues (By similarity).</text>
</comment>
<comment type="similarity">
    <text evidence="2">Belongs to the plant LTP family.</text>
</comment>
<organism>
    <name type="scientific">Prunus armeniaca</name>
    <name type="common">Apricot</name>
    <name type="synonym">Armeniaca vulgaris</name>
    <dbReference type="NCBI Taxonomy" id="36596"/>
    <lineage>
        <taxon>Eukaryota</taxon>
        <taxon>Viridiplantae</taxon>
        <taxon>Streptophyta</taxon>
        <taxon>Embryophyta</taxon>
        <taxon>Tracheophyta</taxon>
        <taxon>Spermatophyta</taxon>
        <taxon>Magnoliopsida</taxon>
        <taxon>eudicotyledons</taxon>
        <taxon>Gunneridae</taxon>
        <taxon>Pentapetalae</taxon>
        <taxon>rosids</taxon>
        <taxon>fabids</taxon>
        <taxon>Rosales</taxon>
        <taxon>Rosaceae</taxon>
        <taxon>Amygdaloideae</taxon>
        <taxon>Amygdaleae</taxon>
        <taxon>Prunus</taxon>
    </lineage>
</organism>
<reference key="1">
    <citation type="journal article" date="2001" name="J. Chromatogr. B">
        <title>Determination of the primary structure of two lipid transfer proteins from apricot (Prunus armeniaca).</title>
        <authorList>
            <person name="Conti A."/>
            <person name="Fortunato D."/>
            <person name="Ortolani C."/>
            <person name="Giuffrida M.G."/>
            <person name="Pravettoni V."/>
            <person name="Napolitano L."/>
            <person name="Farioli L."/>
            <person name="Perono Garoffo L."/>
            <person name="Trambaioli C."/>
            <person name="Pastorello E.A."/>
        </authorList>
    </citation>
    <scope>PROTEIN SEQUENCE</scope>
    <source>
        <tissue>Fruit</tissue>
    </source>
</reference>
<feature type="chain" id="PRO_0000153878" description="Non-specific lipid-transfer protein 2">
    <location>
        <begin position="1"/>
        <end position="68"/>
    </location>
</feature>
<name>NLTP2_PRUAR</name>
<keyword id="KW-0903">Direct protein sequencing</keyword>
<keyword id="KW-0446">Lipid-binding</keyword>
<keyword id="KW-0813">Transport</keyword>
<evidence type="ECO:0000250" key="1"/>
<evidence type="ECO:0000305" key="2"/>
<proteinExistence type="evidence at protein level"/>
<accession>P82353</accession>
<dbReference type="SMR" id="P82353"/>
<dbReference type="Allergome" id="11660">
    <property type="allergen name" value="Pru ar 7k-LTP"/>
</dbReference>
<dbReference type="GO" id="GO:0008289">
    <property type="term" value="F:lipid binding"/>
    <property type="evidence" value="ECO:0007669"/>
    <property type="project" value="UniProtKB-KW"/>
</dbReference>
<dbReference type="GO" id="GO:0006869">
    <property type="term" value="P:lipid transport"/>
    <property type="evidence" value="ECO:0007669"/>
    <property type="project" value="InterPro"/>
</dbReference>
<dbReference type="CDD" id="cd01959">
    <property type="entry name" value="nsLTP2"/>
    <property type="match status" value="1"/>
</dbReference>
<dbReference type="Gene3D" id="1.10.110.10">
    <property type="entry name" value="Plant lipid-transfer and hydrophobic proteins"/>
    <property type="match status" value="1"/>
</dbReference>
<dbReference type="InterPro" id="IPR036312">
    <property type="entry name" value="Bifun_inhib/LTP/seed_sf"/>
</dbReference>
<dbReference type="InterPro" id="IPR016140">
    <property type="entry name" value="Bifunc_inhib/LTP/seed_store"/>
</dbReference>
<dbReference type="InterPro" id="IPR033872">
    <property type="entry name" value="nsLTP2"/>
</dbReference>
<dbReference type="PANTHER" id="PTHR33214">
    <property type="entry name" value="BIFUNCTIONAL INHIBITOR/LIPID-TRANSFER PROTEIN/SEED STORAGE 2S ALBUMIN SUPERFAMILY PROTEIN"/>
    <property type="match status" value="1"/>
</dbReference>
<dbReference type="PANTHER" id="PTHR33214:SF44">
    <property type="entry name" value="NON-SPECIFIC LIPID TRANSFER PROTEIN GPI-ANCHORED 33"/>
    <property type="match status" value="1"/>
</dbReference>
<dbReference type="Pfam" id="PF00234">
    <property type="entry name" value="Tryp_alpha_amyl"/>
    <property type="match status" value="1"/>
</dbReference>
<dbReference type="SMART" id="SM00499">
    <property type="entry name" value="AAI"/>
    <property type="match status" value="1"/>
</dbReference>
<dbReference type="SUPFAM" id="SSF47699">
    <property type="entry name" value="Bifunctional inhibitor/lipid-transfer protein/seed storage 2S albumin"/>
    <property type="match status" value="1"/>
</dbReference>
<protein>
    <recommendedName>
        <fullName>Non-specific lipid-transfer protein 2</fullName>
        <shortName>LTP 2</shortName>
    </recommendedName>
</protein>
<sequence>VTCSPVQLSPCLGPINSGAPSPTTCCQKLREQRPCLCGYLKNPSLRQYVNSPNARKLASNCGVPVPQC</sequence>